<geneLocation type="mitochondrion"/>
<gene>
    <name type="primary">MT-ND4L</name>
    <name type="synonym">MTND4L</name>
    <name type="synonym">NADH4L</name>
    <name type="synonym">ND4L</name>
</gene>
<evidence type="ECO:0000250" key="1">
    <source>
        <dbReference type="UniProtKB" id="P03901"/>
    </source>
</evidence>
<evidence type="ECO:0000250" key="2">
    <source>
        <dbReference type="UniProtKB" id="P03902"/>
    </source>
</evidence>
<evidence type="ECO:0000255" key="3"/>
<evidence type="ECO:0000305" key="4"/>
<dbReference type="EC" id="7.1.1.2"/>
<dbReference type="EMBL" id="AF091427">
    <property type="protein sequence ID" value="AAD24742.1"/>
    <property type="molecule type" value="Genomic_DNA"/>
</dbReference>
<dbReference type="SMR" id="Q7J3B5"/>
<dbReference type="GO" id="GO:0005743">
    <property type="term" value="C:mitochondrial inner membrane"/>
    <property type="evidence" value="ECO:0000250"/>
    <property type="project" value="UniProtKB"/>
</dbReference>
<dbReference type="GO" id="GO:0045271">
    <property type="term" value="C:respiratory chain complex I"/>
    <property type="evidence" value="ECO:0000250"/>
    <property type="project" value="UniProtKB"/>
</dbReference>
<dbReference type="GO" id="GO:0008137">
    <property type="term" value="F:NADH dehydrogenase (ubiquinone) activity"/>
    <property type="evidence" value="ECO:0000250"/>
    <property type="project" value="UniProtKB"/>
</dbReference>
<dbReference type="GO" id="GO:0042773">
    <property type="term" value="P:ATP synthesis coupled electron transport"/>
    <property type="evidence" value="ECO:0007669"/>
    <property type="project" value="InterPro"/>
</dbReference>
<dbReference type="FunFam" id="1.10.287.3510:FF:000002">
    <property type="entry name" value="NADH-ubiquinone oxidoreductase chain 4L"/>
    <property type="match status" value="1"/>
</dbReference>
<dbReference type="Gene3D" id="1.10.287.3510">
    <property type="match status" value="1"/>
</dbReference>
<dbReference type="InterPro" id="IPR001133">
    <property type="entry name" value="NADH_UbQ_OxRdtase_chain4L/K"/>
</dbReference>
<dbReference type="InterPro" id="IPR039428">
    <property type="entry name" value="NUOK/Mnh_C1-like"/>
</dbReference>
<dbReference type="PANTHER" id="PTHR11434:SF0">
    <property type="entry name" value="NADH-UBIQUINONE OXIDOREDUCTASE CHAIN 4L"/>
    <property type="match status" value="1"/>
</dbReference>
<dbReference type="PANTHER" id="PTHR11434">
    <property type="entry name" value="NADH-UBIQUINONE OXIDOREDUCTASE SUBUNIT ND4L"/>
    <property type="match status" value="1"/>
</dbReference>
<dbReference type="Pfam" id="PF00420">
    <property type="entry name" value="Oxidored_q2"/>
    <property type="match status" value="1"/>
</dbReference>
<feature type="chain" id="PRO_0000246148" description="NADH-ubiquinone oxidoreductase chain 4L">
    <location>
        <begin position="1"/>
        <end position="98"/>
    </location>
</feature>
<feature type="transmembrane region" description="Helical" evidence="3">
    <location>
        <begin position="1"/>
        <end position="21"/>
    </location>
</feature>
<feature type="transmembrane region" description="Helical" evidence="3">
    <location>
        <begin position="29"/>
        <end position="49"/>
    </location>
</feature>
<feature type="transmembrane region" description="Helical" evidence="3">
    <location>
        <begin position="61"/>
        <end position="81"/>
    </location>
</feature>
<accession>Q7J3B5</accession>
<comment type="function">
    <text evidence="1">Core subunit of the mitochondrial membrane respiratory chain NADH dehydrogenase (Complex I) which catalyzes electron transfer from NADH through the respiratory chain, using ubiquinone as an electron acceptor. Part of the enzyme membrane arm which is embedded in the lipid bilayer and involved in proton translocation.</text>
</comment>
<comment type="catalytic activity">
    <reaction evidence="1">
        <text>a ubiquinone + NADH + 5 H(+)(in) = a ubiquinol + NAD(+) + 4 H(+)(out)</text>
        <dbReference type="Rhea" id="RHEA:29091"/>
        <dbReference type="Rhea" id="RHEA-COMP:9565"/>
        <dbReference type="Rhea" id="RHEA-COMP:9566"/>
        <dbReference type="ChEBI" id="CHEBI:15378"/>
        <dbReference type="ChEBI" id="CHEBI:16389"/>
        <dbReference type="ChEBI" id="CHEBI:17976"/>
        <dbReference type="ChEBI" id="CHEBI:57540"/>
        <dbReference type="ChEBI" id="CHEBI:57945"/>
        <dbReference type="EC" id="7.1.1.2"/>
    </reaction>
    <physiologicalReaction direction="left-to-right" evidence="1">
        <dbReference type="Rhea" id="RHEA:29092"/>
    </physiologicalReaction>
</comment>
<comment type="subunit">
    <text evidence="2">Core subunit of respiratory chain NADH dehydrogenase (Complex I) which is composed of 45 different subunits.</text>
</comment>
<comment type="subcellular location">
    <subcellularLocation>
        <location evidence="2">Mitochondrion inner membrane</location>
        <topology evidence="3">Multi-pass membrane protein</topology>
    </subcellularLocation>
</comment>
<comment type="similarity">
    <text evidence="4">Belongs to the complex I subunit 4L family.</text>
</comment>
<protein>
    <recommendedName>
        <fullName>NADH-ubiquinone oxidoreductase chain 4L</fullName>
        <ecNumber>7.1.1.2</ecNumber>
    </recommendedName>
    <alternativeName>
        <fullName>NADH dehydrogenase subunit 4L</fullName>
    </alternativeName>
</protein>
<reference key="1">
    <citation type="journal article" date="1999" name="Biol. J. Linn. Soc. Lond.">
        <title>Origin of the Sulawesi macaques (Cercopithecidae: Macaca) as suggested by mitochondrial DNA phylogeny.</title>
        <authorList>
            <person name="Evans B.J."/>
            <person name="Morales J.C."/>
            <person name="Supriatna J."/>
            <person name="Melnick D.J."/>
        </authorList>
    </citation>
    <scope>NUCLEOTIDE SEQUENCE [GENOMIC DNA]</scope>
</reference>
<proteinExistence type="inferred from homology"/>
<name>NU4LM_MACPG</name>
<sequence>MTPTYMNIMLAFTISLLGMLTYRSHLMASLLCLEGMMMSLFIMTTLIALNTHSPLINIMPIILLVFAACEAAVGLALLVSISNTYGLDYIHNLNLLQC</sequence>
<organism>
    <name type="scientific">Macaca pagensis</name>
    <name type="common">Mentawai macaque</name>
    <name type="synonym">Pagai island macaque</name>
    <dbReference type="NCBI Taxonomy" id="230653"/>
    <lineage>
        <taxon>Eukaryota</taxon>
        <taxon>Metazoa</taxon>
        <taxon>Chordata</taxon>
        <taxon>Craniata</taxon>
        <taxon>Vertebrata</taxon>
        <taxon>Euteleostomi</taxon>
        <taxon>Mammalia</taxon>
        <taxon>Eutheria</taxon>
        <taxon>Euarchontoglires</taxon>
        <taxon>Primates</taxon>
        <taxon>Haplorrhini</taxon>
        <taxon>Catarrhini</taxon>
        <taxon>Cercopithecidae</taxon>
        <taxon>Cercopithecinae</taxon>
        <taxon>Macaca</taxon>
    </lineage>
</organism>
<keyword id="KW-0249">Electron transport</keyword>
<keyword id="KW-0472">Membrane</keyword>
<keyword id="KW-0496">Mitochondrion</keyword>
<keyword id="KW-0999">Mitochondrion inner membrane</keyword>
<keyword id="KW-0520">NAD</keyword>
<keyword id="KW-0679">Respiratory chain</keyword>
<keyword id="KW-1278">Translocase</keyword>
<keyword id="KW-0812">Transmembrane</keyword>
<keyword id="KW-1133">Transmembrane helix</keyword>
<keyword id="KW-0813">Transport</keyword>
<keyword id="KW-0830">Ubiquinone</keyword>